<sequence length="519" mass="58697">MNLLSLLLILLGIILGVVVGYIVARNLLHQKQVQARQTADDIVSYANKEADNIKKEKLLEAKEENQILKEQAENELRERRGELQRQETRLLQKEENLDRKSDLLDKKDEILEQKESKLEERQQQVDAKESSVQTLIMKHEQELERISGLTQEEAVKEQLQRVEEELSQDIAILVKEKEKEAKEKVDKTAKELLATTVQRLAAEHTTESTVSVVNLPNDEMKGRIIGREGRNIRTLETLTGIDLIIDDTPEAVILSGFDPIRREIARTALVNLVSDGRIHPGRIEDMVEKARKEVDDIIRDAGEQATFEINVHNMHPDLVKILGRLNYRTSYGQNVLKHSIEVAHLSGMLAAELGEDVTLAKRAGLLHDVGKAIDHEVEGSHVEIGVELAKKYNENNIIINAIHSHHGDVEPTSIISILVAAADALSAARPGARKETLENYIRRLERLETLSESYDGVEKAFAIQAGREIRVVVSPEEIDDLKSYRLARDIKNQIEEELQYPGHIKVTVVRETRAIEYAK</sequence>
<feature type="chain" id="PRO_0000163793" description="Ribonuclease Y">
    <location>
        <begin position="1"/>
        <end position="519"/>
    </location>
</feature>
<feature type="transmembrane region" description="Helical" evidence="1">
    <location>
        <begin position="3"/>
        <end position="23"/>
    </location>
</feature>
<feature type="domain" description="KH" evidence="1">
    <location>
        <begin position="209"/>
        <end position="269"/>
    </location>
</feature>
<feature type="domain" description="HD" evidence="2">
    <location>
        <begin position="335"/>
        <end position="428"/>
    </location>
</feature>
<reference key="1">
    <citation type="journal article" date="2005" name="J. Bacteriol.">
        <title>Insights on evolution of virulence and resistance from the complete genome analysis of an early methicillin-resistant Staphylococcus aureus strain and a biofilm-producing methicillin-resistant Staphylococcus epidermidis strain.</title>
        <authorList>
            <person name="Gill S.R."/>
            <person name="Fouts D.E."/>
            <person name="Archer G.L."/>
            <person name="Mongodin E.F."/>
            <person name="DeBoy R.T."/>
            <person name="Ravel J."/>
            <person name="Paulsen I.T."/>
            <person name="Kolonay J.F."/>
            <person name="Brinkac L.M."/>
            <person name="Beanan M.J."/>
            <person name="Dodson R.J."/>
            <person name="Daugherty S.C."/>
            <person name="Madupu R."/>
            <person name="Angiuoli S.V."/>
            <person name="Durkin A.S."/>
            <person name="Haft D.H."/>
            <person name="Vamathevan J.J."/>
            <person name="Khouri H."/>
            <person name="Utterback T.R."/>
            <person name="Lee C."/>
            <person name="Dimitrov G."/>
            <person name="Jiang L."/>
            <person name="Qin H."/>
            <person name="Weidman J."/>
            <person name="Tran K."/>
            <person name="Kang K.H."/>
            <person name="Hance I.R."/>
            <person name="Nelson K.E."/>
            <person name="Fraser C.M."/>
        </authorList>
    </citation>
    <scope>NUCLEOTIDE SEQUENCE [LARGE SCALE GENOMIC DNA]</scope>
    <source>
        <strain>ATCC 35984 / DSM 28319 / BCRC 17069 / CCUG 31568 / BM 3577 / RP62A</strain>
    </source>
</reference>
<comment type="function">
    <text evidence="1">Endoribonuclease that initiates mRNA decay.</text>
</comment>
<comment type="subcellular location">
    <subcellularLocation>
        <location evidence="1">Cell membrane</location>
        <topology evidence="1">Single-pass membrane protein</topology>
    </subcellularLocation>
</comment>
<comment type="similarity">
    <text evidence="1">Belongs to the RNase Y family.</text>
</comment>
<gene>
    <name evidence="1" type="primary">rny</name>
    <name type="synonym">cvfA</name>
    <name type="ordered locus">SERP0853</name>
</gene>
<keyword id="KW-1003">Cell membrane</keyword>
<keyword id="KW-0255">Endonuclease</keyword>
<keyword id="KW-0378">Hydrolase</keyword>
<keyword id="KW-0472">Membrane</keyword>
<keyword id="KW-0540">Nuclease</keyword>
<keyword id="KW-1185">Reference proteome</keyword>
<keyword id="KW-0694">RNA-binding</keyword>
<keyword id="KW-0812">Transmembrane</keyword>
<keyword id="KW-1133">Transmembrane helix</keyword>
<keyword id="KW-0843">Virulence</keyword>
<organism>
    <name type="scientific">Staphylococcus epidermidis (strain ATCC 35984 / DSM 28319 / BCRC 17069 / CCUG 31568 / BM 3577 / RP62A)</name>
    <dbReference type="NCBI Taxonomy" id="176279"/>
    <lineage>
        <taxon>Bacteria</taxon>
        <taxon>Bacillati</taxon>
        <taxon>Bacillota</taxon>
        <taxon>Bacilli</taxon>
        <taxon>Bacillales</taxon>
        <taxon>Staphylococcaceae</taxon>
        <taxon>Staphylococcus</taxon>
    </lineage>
</organism>
<name>RNY_STAEQ</name>
<evidence type="ECO:0000255" key="1">
    <source>
        <dbReference type="HAMAP-Rule" id="MF_00335"/>
    </source>
</evidence>
<evidence type="ECO:0000255" key="2">
    <source>
        <dbReference type="PROSITE-ProRule" id="PRU01175"/>
    </source>
</evidence>
<dbReference type="EC" id="3.1.-.-" evidence="1"/>
<dbReference type="EMBL" id="CP000029">
    <property type="protein sequence ID" value="AAW54237.1"/>
    <property type="molecule type" value="Genomic_DNA"/>
</dbReference>
<dbReference type="RefSeq" id="WP_001829512.1">
    <property type="nucleotide sequence ID" value="NC_002976.3"/>
</dbReference>
<dbReference type="STRING" id="176279.SERP0853"/>
<dbReference type="GeneID" id="50018902"/>
<dbReference type="KEGG" id="ser:SERP0853"/>
<dbReference type="eggNOG" id="COG1418">
    <property type="taxonomic scope" value="Bacteria"/>
</dbReference>
<dbReference type="HOGENOM" id="CLU_028328_1_0_9"/>
<dbReference type="Proteomes" id="UP000000531">
    <property type="component" value="Chromosome"/>
</dbReference>
<dbReference type="GO" id="GO:0005886">
    <property type="term" value="C:plasma membrane"/>
    <property type="evidence" value="ECO:0007669"/>
    <property type="project" value="UniProtKB-SubCell"/>
</dbReference>
<dbReference type="GO" id="GO:0003723">
    <property type="term" value="F:RNA binding"/>
    <property type="evidence" value="ECO:0007669"/>
    <property type="project" value="UniProtKB-UniRule"/>
</dbReference>
<dbReference type="GO" id="GO:0004521">
    <property type="term" value="F:RNA endonuclease activity"/>
    <property type="evidence" value="ECO:0007669"/>
    <property type="project" value="UniProtKB-UniRule"/>
</dbReference>
<dbReference type="GO" id="GO:0006402">
    <property type="term" value="P:mRNA catabolic process"/>
    <property type="evidence" value="ECO:0007669"/>
    <property type="project" value="UniProtKB-UniRule"/>
</dbReference>
<dbReference type="CDD" id="cd00077">
    <property type="entry name" value="HDc"/>
    <property type="match status" value="1"/>
</dbReference>
<dbReference type="CDD" id="cd22431">
    <property type="entry name" value="KH-I_RNaseY"/>
    <property type="match status" value="1"/>
</dbReference>
<dbReference type="FunFam" id="1.10.3210.10:FF:000003">
    <property type="entry name" value="Ribonuclease Y"/>
    <property type="match status" value="1"/>
</dbReference>
<dbReference type="FunFam" id="3.30.1370.10:FF:000006">
    <property type="entry name" value="Ribonuclease Y"/>
    <property type="match status" value="1"/>
</dbReference>
<dbReference type="Gene3D" id="1.10.3210.10">
    <property type="entry name" value="Hypothetical protein af1432"/>
    <property type="match status" value="1"/>
</dbReference>
<dbReference type="Gene3D" id="3.30.1370.10">
    <property type="entry name" value="K Homology domain, type 1"/>
    <property type="match status" value="1"/>
</dbReference>
<dbReference type="HAMAP" id="MF_00335">
    <property type="entry name" value="RNase_Y"/>
    <property type="match status" value="1"/>
</dbReference>
<dbReference type="InterPro" id="IPR003607">
    <property type="entry name" value="HD/PDEase_dom"/>
</dbReference>
<dbReference type="InterPro" id="IPR006674">
    <property type="entry name" value="HD_domain"/>
</dbReference>
<dbReference type="InterPro" id="IPR006675">
    <property type="entry name" value="HDIG_dom"/>
</dbReference>
<dbReference type="InterPro" id="IPR004087">
    <property type="entry name" value="KH_dom"/>
</dbReference>
<dbReference type="InterPro" id="IPR004088">
    <property type="entry name" value="KH_dom_type_1"/>
</dbReference>
<dbReference type="InterPro" id="IPR036612">
    <property type="entry name" value="KH_dom_type_1_sf"/>
</dbReference>
<dbReference type="InterPro" id="IPR017705">
    <property type="entry name" value="Ribonuclease_Y"/>
</dbReference>
<dbReference type="InterPro" id="IPR022711">
    <property type="entry name" value="RNase_Y_N"/>
</dbReference>
<dbReference type="NCBIfam" id="TIGR00277">
    <property type="entry name" value="HDIG"/>
    <property type="match status" value="1"/>
</dbReference>
<dbReference type="NCBIfam" id="TIGR03319">
    <property type="entry name" value="RNase_Y"/>
    <property type="match status" value="1"/>
</dbReference>
<dbReference type="PANTHER" id="PTHR12826">
    <property type="entry name" value="RIBONUCLEASE Y"/>
    <property type="match status" value="1"/>
</dbReference>
<dbReference type="PANTHER" id="PTHR12826:SF15">
    <property type="entry name" value="RIBONUCLEASE Y"/>
    <property type="match status" value="1"/>
</dbReference>
<dbReference type="Pfam" id="PF01966">
    <property type="entry name" value="HD"/>
    <property type="match status" value="1"/>
</dbReference>
<dbReference type="Pfam" id="PF00013">
    <property type="entry name" value="KH_1"/>
    <property type="match status" value="1"/>
</dbReference>
<dbReference type="Pfam" id="PF12072">
    <property type="entry name" value="RNase_Y_N"/>
    <property type="match status" value="1"/>
</dbReference>
<dbReference type="SMART" id="SM00471">
    <property type="entry name" value="HDc"/>
    <property type="match status" value="1"/>
</dbReference>
<dbReference type="SMART" id="SM00322">
    <property type="entry name" value="KH"/>
    <property type="match status" value="1"/>
</dbReference>
<dbReference type="SUPFAM" id="SSF54791">
    <property type="entry name" value="Eukaryotic type KH-domain (KH-domain type I)"/>
    <property type="match status" value="1"/>
</dbReference>
<dbReference type="SUPFAM" id="SSF109604">
    <property type="entry name" value="HD-domain/PDEase-like"/>
    <property type="match status" value="1"/>
</dbReference>
<dbReference type="PROSITE" id="PS51831">
    <property type="entry name" value="HD"/>
    <property type="match status" value="1"/>
</dbReference>
<dbReference type="PROSITE" id="PS50084">
    <property type="entry name" value="KH_TYPE_1"/>
    <property type="match status" value="1"/>
</dbReference>
<proteinExistence type="inferred from homology"/>
<protein>
    <recommendedName>
        <fullName evidence="1">Ribonuclease Y</fullName>
        <shortName evidence="1">RNase Y</shortName>
        <ecNumber evidence="1">3.1.-.-</ecNumber>
    </recommendedName>
</protein>
<accession>Q5HPQ5</accession>